<name>KCY_OLEA2</name>
<gene>
    <name evidence="1" type="primary">cmk</name>
    <name type="ordered locus">Dde_1452</name>
</gene>
<keyword id="KW-0067">ATP-binding</keyword>
<keyword id="KW-0963">Cytoplasm</keyword>
<keyword id="KW-0418">Kinase</keyword>
<keyword id="KW-0547">Nucleotide-binding</keyword>
<keyword id="KW-1185">Reference proteome</keyword>
<keyword id="KW-0808">Transferase</keyword>
<protein>
    <recommendedName>
        <fullName evidence="1">Cytidylate kinase</fullName>
        <shortName evidence="1">CK</shortName>
        <ecNumber evidence="1">2.7.4.25</ecNumber>
    </recommendedName>
    <alternativeName>
        <fullName evidence="1">Cytidine monophosphate kinase</fullName>
        <shortName evidence="1">CMP kinase</shortName>
    </alternativeName>
</protein>
<organism>
    <name type="scientific">Oleidesulfovibrio alaskensis (strain ATCC BAA-1058 / DSM 17464 / G20)</name>
    <name type="common">Desulfovibrio alaskensis</name>
    <dbReference type="NCBI Taxonomy" id="207559"/>
    <lineage>
        <taxon>Bacteria</taxon>
        <taxon>Pseudomonadati</taxon>
        <taxon>Thermodesulfobacteriota</taxon>
        <taxon>Desulfovibrionia</taxon>
        <taxon>Desulfovibrionales</taxon>
        <taxon>Desulfovibrionaceae</taxon>
        <taxon>Oleidesulfovibrio</taxon>
    </lineage>
</organism>
<sequence>MAEHIIVTLDGPAGVGKTTLARNIAEELGIAYMDTGAMFRSIGWKLGNVVESVPPAEIEKKLAGFRFSLSGAGAATQLSLNGTPVGDEIRTEEVALLASAVATLPVVRTFLKKTQQKLGSEVSLVAEGRDMGTVIFPAARYKFFLDATPEERARRRYEQLTAAGETPDLKALTDQIRKRDHQDRSRVVAPLRPADDAIIIDTTELDVQGVFAAIMSKLK</sequence>
<comment type="catalytic activity">
    <reaction evidence="1">
        <text>CMP + ATP = CDP + ADP</text>
        <dbReference type="Rhea" id="RHEA:11600"/>
        <dbReference type="ChEBI" id="CHEBI:30616"/>
        <dbReference type="ChEBI" id="CHEBI:58069"/>
        <dbReference type="ChEBI" id="CHEBI:60377"/>
        <dbReference type="ChEBI" id="CHEBI:456216"/>
        <dbReference type="EC" id="2.7.4.25"/>
    </reaction>
</comment>
<comment type="catalytic activity">
    <reaction evidence="1">
        <text>dCMP + ATP = dCDP + ADP</text>
        <dbReference type="Rhea" id="RHEA:25094"/>
        <dbReference type="ChEBI" id="CHEBI:30616"/>
        <dbReference type="ChEBI" id="CHEBI:57566"/>
        <dbReference type="ChEBI" id="CHEBI:58593"/>
        <dbReference type="ChEBI" id="CHEBI:456216"/>
        <dbReference type="EC" id="2.7.4.25"/>
    </reaction>
</comment>
<comment type="subcellular location">
    <subcellularLocation>
        <location evidence="1">Cytoplasm</location>
    </subcellularLocation>
</comment>
<comment type="similarity">
    <text evidence="1">Belongs to the cytidylate kinase family. Type 1 subfamily.</text>
</comment>
<accession>Q311Z5</accession>
<feature type="chain" id="PRO_1000058975" description="Cytidylate kinase">
    <location>
        <begin position="1"/>
        <end position="219"/>
    </location>
</feature>
<feature type="binding site" evidence="1">
    <location>
        <begin position="11"/>
        <end position="19"/>
    </location>
    <ligand>
        <name>ATP</name>
        <dbReference type="ChEBI" id="CHEBI:30616"/>
    </ligand>
</feature>
<dbReference type="EC" id="2.7.4.25" evidence="1"/>
<dbReference type="EMBL" id="CP000112">
    <property type="protein sequence ID" value="ABB38251.1"/>
    <property type="molecule type" value="Genomic_DNA"/>
</dbReference>
<dbReference type="RefSeq" id="WP_011367419.1">
    <property type="nucleotide sequence ID" value="NC_007519.1"/>
</dbReference>
<dbReference type="SMR" id="Q311Z5"/>
<dbReference type="STRING" id="207559.Dde_1452"/>
<dbReference type="KEGG" id="dde:Dde_1452"/>
<dbReference type="eggNOG" id="COG0283">
    <property type="taxonomic scope" value="Bacteria"/>
</dbReference>
<dbReference type="HOGENOM" id="CLU_079959_0_0_7"/>
<dbReference type="Proteomes" id="UP000002710">
    <property type="component" value="Chromosome"/>
</dbReference>
<dbReference type="GO" id="GO:0005737">
    <property type="term" value="C:cytoplasm"/>
    <property type="evidence" value="ECO:0007669"/>
    <property type="project" value="UniProtKB-SubCell"/>
</dbReference>
<dbReference type="GO" id="GO:0005524">
    <property type="term" value="F:ATP binding"/>
    <property type="evidence" value="ECO:0007669"/>
    <property type="project" value="UniProtKB-UniRule"/>
</dbReference>
<dbReference type="GO" id="GO:0036430">
    <property type="term" value="F:CMP kinase activity"/>
    <property type="evidence" value="ECO:0007669"/>
    <property type="project" value="RHEA"/>
</dbReference>
<dbReference type="GO" id="GO:0036431">
    <property type="term" value="F:dCMP kinase activity"/>
    <property type="evidence" value="ECO:0007669"/>
    <property type="project" value="RHEA"/>
</dbReference>
<dbReference type="GO" id="GO:0006220">
    <property type="term" value="P:pyrimidine nucleotide metabolic process"/>
    <property type="evidence" value="ECO:0007669"/>
    <property type="project" value="UniProtKB-UniRule"/>
</dbReference>
<dbReference type="CDD" id="cd02020">
    <property type="entry name" value="CMPK"/>
    <property type="match status" value="1"/>
</dbReference>
<dbReference type="Gene3D" id="3.40.50.300">
    <property type="entry name" value="P-loop containing nucleotide triphosphate hydrolases"/>
    <property type="match status" value="1"/>
</dbReference>
<dbReference type="HAMAP" id="MF_00238">
    <property type="entry name" value="Cytidyl_kinase_type1"/>
    <property type="match status" value="1"/>
</dbReference>
<dbReference type="InterPro" id="IPR003136">
    <property type="entry name" value="Cytidylate_kin"/>
</dbReference>
<dbReference type="InterPro" id="IPR011994">
    <property type="entry name" value="Cytidylate_kinase_dom"/>
</dbReference>
<dbReference type="InterPro" id="IPR027417">
    <property type="entry name" value="P-loop_NTPase"/>
</dbReference>
<dbReference type="NCBIfam" id="TIGR00017">
    <property type="entry name" value="cmk"/>
    <property type="match status" value="1"/>
</dbReference>
<dbReference type="Pfam" id="PF02224">
    <property type="entry name" value="Cytidylate_kin"/>
    <property type="match status" value="1"/>
</dbReference>
<dbReference type="SUPFAM" id="SSF52540">
    <property type="entry name" value="P-loop containing nucleoside triphosphate hydrolases"/>
    <property type="match status" value="1"/>
</dbReference>
<reference key="1">
    <citation type="journal article" date="2011" name="J. Bacteriol.">
        <title>Complete genome sequence and updated annotation of Desulfovibrio alaskensis G20.</title>
        <authorList>
            <person name="Hauser L.J."/>
            <person name="Land M.L."/>
            <person name="Brown S.D."/>
            <person name="Larimer F."/>
            <person name="Keller K.L."/>
            <person name="Rapp-Giles B.J."/>
            <person name="Price M.N."/>
            <person name="Lin M."/>
            <person name="Bruce D.C."/>
            <person name="Detter J.C."/>
            <person name="Tapia R."/>
            <person name="Han C.S."/>
            <person name="Goodwin L.A."/>
            <person name="Cheng J.F."/>
            <person name="Pitluck S."/>
            <person name="Copeland A."/>
            <person name="Lucas S."/>
            <person name="Nolan M."/>
            <person name="Lapidus A.L."/>
            <person name="Palumbo A.V."/>
            <person name="Wall J.D."/>
        </authorList>
    </citation>
    <scope>NUCLEOTIDE SEQUENCE [LARGE SCALE GENOMIC DNA]</scope>
    <source>
        <strain>ATCC BAA-1058 / DSM 17464 / G20</strain>
    </source>
</reference>
<proteinExistence type="inferred from homology"/>
<evidence type="ECO:0000255" key="1">
    <source>
        <dbReference type="HAMAP-Rule" id="MF_00238"/>
    </source>
</evidence>